<keyword id="KW-0093">Biotin biosynthesis</keyword>
<keyword id="KW-0963">Cytoplasm</keyword>
<keyword id="KW-0378">Hydrolase</keyword>
<keyword id="KW-1185">Reference proteome</keyword>
<keyword id="KW-0719">Serine esterase</keyword>
<name>BIOH_PHOLL</name>
<feature type="chain" id="PRO_0000204486" description="Pimeloyl-[acyl-carrier protein] methyl ester esterase">
    <location>
        <begin position="1"/>
        <end position="261"/>
    </location>
</feature>
<feature type="domain" description="AB hydrolase-1" evidence="1">
    <location>
        <begin position="16"/>
        <end position="241"/>
    </location>
</feature>
<feature type="active site" description="Nucleophile" evidence="2">
    <location>
        <position position="82"/>
    </location>
</feature>
<feature type="active site" evidence="2">
    <location>
        <position position="207"/>
    </location>
</feature>
<feature type="active site" evidence="2">
    <location>
        <position position="235"/>
    </location>
</feature>
<feature type="binding site" evidence="2">
    <location>
        <position position="22"/>
    </location>
    <ligand>
        <name>substrate</name>
    </ligand>
</feature>
<feature type="binding site" evidence="2">
    <location>
        <begin position="82"/>
        <end position="83"/>
    </location>
    <ligand>
        <name>substrate</name>
    </ligand>
</feature>
<feature type="binding site" evidence="2">
    <location>
        <begin position="143"/>
        <end position="147"/>
    </location>
    <ligand>
        <name>substrate</name>
    </ligand>
</feature>
<feature type="binding site" evidence="2">
    <location>
        <position position="235"/>
    </location>
    <ligand>
        <name>substrate</name>
    </ligand>
</feature>
<organism>
    <name type="scientific">Photorhabdus laumondii subsp. laumondii (strain DSM 15139 / CIP 105565 / TT01)</name>
    <name type="common">Photorhabdus luminescens subsp. laumondii</name>
    <dbReference type="NCBI Taxonomy" id="243265"/>
    <lineage>
        <taxon>Bacteria</taxon>
        <taxon>Pseudomonadati</taxon>
        <taxon>Pseudomonadota</taxon>
        <taxon>Gammaproteobacteria</taxon>
        <taxon>Enterobacterales</taxon>
        <taxon>Morganellaceae</taxon>
        <taxon>Photorhabdus</taxon>
    </lineage>
</organism>
<proteinExistence type="inferred from homology"/>
<comment type="function">
    <text evidence="2">The physiological role of BioH is to remove the methyl group introduced by BioC when the pimeloyl moiety is complete. It allows to synthesize pimeloyl-ACP via the fatty acid synthetic pathway through the hydrolysis of the ester bonds of pimeloyl-ACP esters.</text>
</comment>
<comment type="catalytic activity">
    <reaction evidence="2">
        <text>6-carboxyhexanoyl-[ACP] methyl ester + H2O = 6-carboxyhexanoyl-[ACP] + methanol + H(+)</text>
        <dbReference type="Rhea" id="RHEA:42700"/>
        <dbReference type="Rhea" id="RHEA-COMP:9955"/>
        <dbReference type="Rhea" id="RHEA-COMP:10186"/>
        <dbReference type="ChEBI" id="CHEBI:15377"/>
        <dbReference type="ChEBI" id="CHEBI:15378"/>
        <dbReference type="ChEBI" id="CHEBI:17790"/>
        <dbReference type="ChEBI" id="CHEBI:78846"/>
        <dbReference type="ChEBI" id="CHEBI:82735"/>
        <dbReference type="EC" id="3.1.1.85"/>
    </reaction>
</comment>
<comment type="pathway">
    <text evidence="2">Cofactor biosynthesis; biotin biosynthesis.</text>
</comment>
<comment type="subunit">
    <text evidence="2">Monomer.</text>
</comment>
<comment type="subcellular location">
    <subcellularLocation>
        <location evidence="2">Cytoplasm</location>
    </subcellularLocation>
</comment>
<comment type="similarity">
    <text evidence="2">Belongs to the AB hydrolase superfamily. Carboxylesterase BioH family.</text>
</comment>
<dbReference type="EC" id="3.1.1.85" evidence="2"/>
<dbReference type="EMBL" id="BX571859">
    <property type="protein sequence ID" value="CAE12499.1"/>
    <property type="molecule type" value="Genomic_DNA"/>
</dbReference>
<dbReference type="RefSeq" id="WP_011144604.1">
    <property type="nucleotide sequence ID" value="NC_005126.1"/>
</dbReference>
<dbReference type="SMR" id="Q7N9V7"/>
<dbReference type="STRING" id="243265.plu0204"/>
<dbReference type="ESTHER" id="pholu-BIOH">
    <property type="family name" value="BioH"/>
</dbReference>
<dbReference type="GeneID" id="48846501"/>
<dbReference type="KEGG" id="plu:plu0204"/>
<dbReference type="eggNOG" id="COG0596">
    <property type="taxonomic scope" value="Bacteria"/>
</dbReference>
<dbReference type="HOGENOM" id="CLU_020336_12_2_6"/>
<dbReference type="OrthoDB" id="9780744at2"/>
<dbReference type="UniPathway" id="UPA00078"/>
<dbReference type="Proteomes" id="UP000002514">
    <property type="component" value="Chromosome"/>
</dbReference>
<dbReference type="GO" id="GO:0005737">
    <property type="term" value="C:cytoplasm"/>
    <property type="evidence" value="ECO:0007669"/>
    <property type="project" value="UniProtKB-SubCell"/>
</dbReference>
<dbReference type="GO" id="GO:0090499">
    <property type="term" value="F:pimelyl-[acyl-carrier protein] methyl ester esterase activity"/>
    <property type="evidence" value="ECO:0007669"/>
    <property type="project" value="UniProtKB-EC"/>
</dbReference>
<dbReference type="GO" id="GO:0009102">
    <property type="term" value="P:biotin biosynthetic process"/>
    <property type="evidence" value="ECO:0007669"/>
    <property type="project" value="UniProtKB-UniRule"/>
</dbReference>
<dbReference type="Gene3D" id="3.40.50.1820">
    <property type="entry name" value="alpha/beta hydrolase"/>
    <property type="match status" value="1"/>
</dbReference>
<dbReference type="HAMAP" id="MF_01260">
    <property type="entry name" value="Carboxylester"/>
    <property type="match status" value="1"/>
</dbReference>
<dbReference type="InterPro" id="IPR000073">
    <property type="entry name" value="AB_hydrolase_1"/>
</dbReference>
<dbReference type="InterPro" id="IPR029058">
    <property type="entry name" value="AB_hydrolase_fold"/>
</dbReference>
<dbReference type="InterPro" id="IPR010076">
    <property type="entry name" value="BioH"/>
</dbReference>
<dbReference type="InterPro" id="IPR050228">
    <property type="entry name" value="Carboxylesterase_BioH"/>
</dbReference>
<dbReference type="NCBIfam" id="TIGR01738">
    <property type="entry name" value="bioH"/>
    <property type="match status" value="1"/>
</dbReference>
<dbReference type="PANTHER" id="PTHR43194">
    <property type="entry name" value="HYDROLASE ALPHA/BETA FOLD FAMILY"/>
    <property type="match status" value="1"/>
</dbReference>
<dbReference type="PANTHER" id="PTHR43194:SF5">
    <property type="entry name" value="PIMELOYL-[ACYL-CARRIER PROTEIN] METHYL ESTER ESTERASE"/>
    <property type="match status" value="1"/>
</dbReference>
<dbReference type="Pfam" id="PF00561">
    <property type="entry name" value="Abhydrolase_1"/>
    <property type="match status" value="1"/>
</dbReference>
<dbReference type="SUPFAM" id="SSF53474">
    <property type="entry name" value="alpha/beta-Hydrolases"/>
    <property type="match status" value="1"/>
</dbReference>
<accession>Q7N9V7</accession>
<gene>
    <name evidence="2" type="primary">bioH</name>
    <name type="ordered locus">plu0204</name>
</gene>
<protein>
    <recommendedName>
        <fullName evidence="2">Pimeloyl-[acyl-carrier protein] methyl ester esterase</fullName>
        <ecNumber evidence="2">3.1.1.85</ecNumber>
    </recommendedName>
    <alternativeName>
        <fullName evidence="2">Biotin synthesis protein BioH</fullName>
    </alternativeName>
    <alternativeName>
        <fullName evidence="2">Carboxylesterase BioH</fullName>
    </alternativeName>
</protein>
<sequence length="261" mass="29519">MADLFWQTSDEGSRDLVLLHGWGLNAEVWRSIEMRCAPHFRLHLVDLPGYGRSQKYGPMNLADMADEVWRYAPENALWLGWSLGGLVASRIALDHQDKVAGLITVASSPHFSAESDWPGIKPEVLHDFEHQLSKDFQRTVERFLALQTLGTDSARQDARLLKSVVLAQPMPSVEVLHVGLEILRTEDLRQPLAELAIPFLRIYGYLDGLVPRKIINILDEKWPRSVSAMMRHAAHAPFISHPDEFVGLLTEFASREVLQGR</sequence>
<evidence type="ECO:0000255" key="1"/>
<evidence type="ECO:0000255" key="2">
    <source>
        <dbReference type="HAMAP-Rule" id="MF_01260"/>
    </source>
</evidence>
<reference key="1">
    <citation type="journal article" date="2003" name="Nat. Biotechnol.">
        <title>The genome sequence of the entomopathogenic bacterium Photorhabdus luminescens.</title>
        <authorList>
            <person name="Duchaud E."/>
            <person name="Rusniok C."/>
            <person name="Frangeul L."/>
            <person name="Buchrieser C."/>
            <person name="Givaudan A."/>
            <person name="Taourit S."/>
            <person name="Bocs S."/>
            <person name="Boursaux-Eude C."/>
            <person name="Chandler M."/>
            <person name="Charles J.-F."/>
            <person name="Dassa E."/>
            <person name="Derose R."/>
            <person name="Derzelle S."/>
            <person name="Freyssinet G."/>
            <person name="Gaudriault S."/>
            <person name="Medigue C."/>
            <person name="Lanois A."/>
            <person name="Powell K."/>
            <person name="Siguier P."/>
            <person name="Vincent R."/>
            <person name="Wingate V."/>
            <person name="Zouine M."/>
            <person name="Glaser P."/>
            <person name="Boemare N."/>
            <person name="Danchin A."/>
            <person name="Kunst F."/>
        </authorList>
    </citation>
    <scope>NUCLEOTIDE SEQUENCE [LARGE SCALE GENOMIC DNA]</scope>
    <source>
        <strain>DSM 15139 / CIP 105565 / TT01</strain>
    </source>
</reference>